<dbReference type="EC" id="3.2.1.4"/>
<dbReference type="EMBL" id="D12901">
    <property type="protein sequence ID" value="BAA02297.1"/>
    <property type="molecule type" value="mRNA"/>
</dbReference>
<dbReference type="EMBL" id="DF126458">
    <property type="protein sequence ID" value="GAA87033.1"/>
    <property type="molecule type" value="Genomic_DNA"/>
</dbReference>
<dbReference type="SMR" id="Q12679"/>
<dbReference type="STRING" id="1033177.Q12679"/>
<dbReference type="CAZy" id="GH12">
    <property type="family name" value="Glycoside Hydrolase Family 12"/>
</dbReference>
<dbReference type="VEuPathDB" id="FungiDB:AKAW_05147"/>
<dbReference type="eggNOG" id="ENOG502SH4Y">
    <property type="taxonomic scope" value="Eukaryota"/>
</dbReference>
<dbReference type="InParanoid" id="Q12679"/>
<dbReference type="OrthoDB" id="77715at5052"/>
<dbReference type="GO" id="GO:0008810">
    <property type="term" value="F:cellulase activity"/>
    <property type="evidence" value="ECO:0007669"/>
    <property type="project" value="UniProtKB-EC"/>
</dbReference>
<dbReference type="GO" id="GO:0030245">
    <property type="term" value="P:cellulose catabolic process"/>
    <property type="evidence" value="ECO:0007669"/>
    <property type="project" value="UniProtKB-KW"/>
</dbReference>
<dbReference type="FunFam" id="2.60.120.180:FF:000004">
    <property type="entry name" value="Endoglucanase A eglA"/>
    <property type="match status" value="1"/>
</dbReference>
<dbReference type="Gene3D" id="2.60.120.180">
    <property type="match status" value="1"/>
</dbReference>
<dbReference type="InterPro" id="IPR013320">
    <property type="entry name" value="ConA-like_dom_sf"/>
</dbReference>
<dbReference type="InterPro" id="IPR013319">
    <property type="entry name" value="GH11/12"/>
</dbReference>
<dbReference type="InterPro" id="IPR002594">
    <property type="entry name" value="GH12"/>
</dbReference>
<dbReference type="PANTHER" id="PTHR34002">
    <property type="entry name" value="BLR1656 PROTEIN"/>
    <property type="match status" value="1"/>
</dbReference>
<dbReference type="PANTHER" id="PTHR34002:SF10">
    <property type="entry name" value="PUTATIVE-RELATED"/>
    <property type="match status" value="1"/>
</dbReference>
<dbReference type="Pfam" id="PF01670">
    <property type="entry name" value="Glyco_hydro_12"/>
    <property type="match status" value="1"/>
</dbReference>
<dbReference type="SUPFAM" id="SSF49899">
    <property type="entry name" value="Concanavalin A-like lectins/glucanases"/>
    <property type="match status" value="1"/>
</dbReference>
<name>GUNA_ASPKW</name>
<proteinExistence type="evidence at transcript level"/>
<sequence length="239" mass="25813">MKLSMTLSLFAATAMGQTMCSQYDSASSPPYSVNQNLWGEYQGTGSQCVYVDKLSSSGASWHTKWTWSGGEGTVKSYSNSGLTFDKKLVSDVSSIPTSVTWSQDDTNVQADVSYDLFTAANADHATSSGDYELMIWLARYGSVQPIGKQIATATVGGKSWEVWYGTSTQAGAEQKTYSFVAGSPINSWSGDIKDFFNYLTQNQGFPASSQHLITLQFGTEPFTGGPATFTVDNWTASVN</sequence>
<keyword id="KW-0119">Carbohydrate metabolism</keyword>
<keyword id="KW-0136">Cellulose degradation</keyword>
<keyword id="KW-0326">Glycosidase</keyword>
<keyword id="KW-0378">Hydrolase</keyword>
<keyword id="KW-0624">Polysaccharide degradation</keyword>
<keyword id="KW-0732">Signal</keyword>
<comment type="function">
    <text>Has carboxylmethylcellulase activity.</text>
</comment>
<comment type="catalytic activity">
    <reaction>
        <text>Endohydrolysis of (1-&gt;4)-beta-D-glucosidic linkages in cellulose, lichenin and cereal beta-D-glucans.</text>
        <dbReference type="EC" id="3.2.1.4"/>
    </reaction>
</comment>
<comment type="similarity">
    <text evidence="2">Belongs to the glycosyl hydrolase 12 (cellulase H) family.</text>
</comment>
<feature type="signal peptide" evidence="1">
    <location>
        <begin position="1"/>
        <end position="16"/>
    </location>
</feature>
<feature type="chain" id="PRO_0000008019" description="Endoglucanase A">
    <location>
        <begin position="17"/>
        <end position="239"/>
    </location>
</feature>
<feature type="sequence conflict" description="In Ref. 1; BAA02297." evidence="2" ref="1">
    <original>F</original>
    <variation>C</variation>
    <location>
        <position position="217"/>
    </location>
</feature>
<evidence type="ECO:0000255" key="1"/>
<evidence type="ECO:0000305" key="2"/>
<gene>
    <name type="primary">cekA</name>
    <name type="ORF">AKAW_05147</name>
</gene>
<accession>Q12679</accession>
<accession>G7XJV2</accession>
<protein>
    <recommendedName>
        <fullName>Endoglucanase A</fullName>
        <ecNumber>3.2.1.4</ecNumber>
    </recommendedName>
    <alternativeName>
        <fullName>CMCase-I</fullName>
    </alternativeName>
    <alternativeName>
        <fullName>Carboxymethylcellulase</fullName>
    </alternativeName>
    <alternativeName>
        <fullName>Cellulase A</fullName>
    </alternativeName>
    <alternativeName>
        <fullName>Endo-1,4-beta-glucanase A</fullName>
    </alternativeName>
</protein>
<organism>
    <name type="scientific">Aspergillus kawachii (strain NBRC 4308)</name>
    <name type="common">White koji mold</name>
    <name type="synonym">Aspergillus awamori var. kawachi</name>
    <dbReference type="NCBI Taxonomy" id="1033177"/>
    <lineage>
        <taxon>Eukaryota</taxon>
        <taxon>Fungi</taxon>
        <taxon>Dikarya</taxon>
        <taxon>Ascomycota</taxon>
        <taxon>Pezizomycotina</taxon>
        <taxon>Eurotiomycetes</taxon>
        <taxon>Eurotiomycetidae</taxon>
        <taxon>Eurotiales</taxon>
        <taxon>Aspergillaceae</taxon>
        <taxon>Aspergillus</taxon>
        <taxon>Aspergillus subgen. Circumdati</taxon>
    </lineage>
</organism>
<reference key="1">
    <citation type="journal article" date="1995" name="Curr. Genet.">
        <title>Cloning and sequencing of cellulase cDNA from Aspergillus kawachii and its expression in Saccharomyces cerevisiae.</title>
        <authorList>
            <person name="Sakamoto S."/>
            <person name="Tamura G."/>
            <person name="Ito K."/>
            <person name="Ishikawa T."/>
            <person name="Iwano K."/>
            <person name="Nishiya N."/>
        </authorList>
    </citation>
    <scope>NUCLEOTIDE SEQUENCE [MRNA]</scope>
    <source>
        <strain>NBRC 4308</strain>
    </source>
</reference>
<reference key="2">
    <citation type="journal article" date="2011" name="Eukaryot. Cell">
        <title>Genome sequence of the white koji mold Aspergillus kawachii IFO 4308, used for brewing the Japanese distilled spirit shochu.</title>
        <authorList>
            <person name="Futagami T."/>
            <person name="Mori K."/>
            <person name="Yamashita A."/>
            <person name="Wada S."/>
            <person name="Kajiwara Y."/>
            <person name="Takashita H."/>
            <person name="Omori T."/>
            <person name="Takegawa K."/>
            <person name="Tashiro K."/>
            <person name="Kuhara S."/>
            <person name="Goto M."/>
        </authorList>
    </citation>
    <scope>NUCLEOTIDE SEQUENCE [LARGE SCALE GENOMIC DNA]</scope>
    <source>
        <strain>NBRC 4308</strain>
    </source>
</reference>